<sequence>MAVGKNKGLSKGGKKGVKKKIVDPFTRKDWYDVKAPSMFSKRQVGTTLVNRTQGTKIASEGLKGRVFEVSLADLQADTDAERSFRKFRLIAEDVQGRNVLCNFHGMDLTTDKLRWMVKKWQTLIEANIDVKTTDGYVLRVFCIGFTNKDSLSQRKTCYAQHTQVRAIRKKMCEIITRDVTNSELREVVNKLIPDSIAKDIEKACHGIYPLRDVCIRKVKVLKRPRFEISKLMELHGEGGGGKREAGDKSERPEGYEPPVQESV</sequence>
<comment type="subunit">
    <text evidence="1">Component of the small ribosomal subunit. Mature ribosomes consist of a small (40S) and a large (60S) subunit. The 40S subunit contains about 33 different proteins and 1 molecule of RNA (18S). The 60S subunit contains about 49 different proteins and 3 molecules of RNA (28S, 5.8S and 5S).</text>
</comment>
<comment type="subcellular location">
    <subcellularLocation>
        <location evidence="1">Cytoplasm</location>
    </subcellularLocation>
</comment>
<comment type="similarity">
    <text evidence="1">Belongs to the eukaryotic ribosomal protein eS1 family.</text>
</comment>
<evidence type="ECO:0000255" key="1">
    <source>
        <dbReference type="HAMAP-Rule" id="MF_03122"/>
    </source>
</evidence>
<evidence type="ECO:0000256" key="2">
    <source>
        <dbReference type="SAM" id="MobiDB-lite"/>
    </source>
</evidence>
<evidence type="ECO:0000305" key="3"/>
<proteinExistence type="evidence at transcript level"/>
<organism>
    <name type="scientific">Bombyx mandarina</name>
    <name type="common">Wild silk moth</name>
    <name type="synonym">Wild silkworm</name>
    <dbReference type="NCBI Taxonomy" id="7092"/>
    <lineage>
        <taxon>Eukaryota</taxon>
        <taxon>Metazoa</taxon>
        <taxon>Ecdysozoa</taxon>
        <taxon>Arthropoda</taxon>
        <taxon>Hexapoda</taxon>
        <taxon>Insecta</taxon>
        <taxon>Pterygota</taxon>
        <taxon>Neoptera</taxon>
        <taxon>Endopterygota</taxon>
        <taxon>Lepidoptera</taxon>
        <taxon>Glossata</taxon>
        <taxon>Ditrysia</taxon>
        <taxon>Bombycoidea</taxon>
        <taxon>Bombycidae</taxon>
        <taxon>Bombycinae</taxon>
        <taxon>Bombyx</taxon>
    </lineage>
</organism>
<dbReference type="EMBL" id="EF565369">
    <property type="protein sequence ID" value="ABQ42714.1"/>
    <property type="molecule type" value="mRNA"/>
</dbReference>
<dbReference type="RefSeq" id="XP_028039289.1">
    <property type="nucleotide sequence ID" value="XM_028183488.1"/>
</dbReference>
<dbReference type="SMR" id="A5JSW9"/>
<dbReference type="EnsemblMetazoa" id="XM_028183488.1">
    <property type="protein sequence ID" value="XP_028039289.1"/>
    <property type="gene ID" value="LOC114249786"/>
</dbReference>
<dbReference type="GeneID" id="114249786"/>
<dbReference type="OrthoDB" id="9834376at2759"/>
<dbReference type="Proteomes" id="UP000504629">
    <property type="component" value="Unplaced"/>
</dbReference>
<dbReference type="GO" id="GO:0022627">
    <property type="term" value="C:cytosolic small ribosomal subunit"/>
    <property type="evidence" value="ECO:0007669"/>
    <property type="project" value="UniProtKB-UniRule"/>
</dbReference>
<dbReference type="GO" id="GO:0003735">
    <property type="term" value="F:structural constituent of ribosome"/>
    <property type="evidence" value="ECO:0007669"/>
    <property type="project" value="UniProtKB-UniRule"/>
</dbReference>
<dbReference type="GO" id="GO:0006412">
    <property type="term" value="P:translation"/>
    <property type="evidence" value="ECO:0007669"/>
    <property type="project" value="UniProtKB-UniRule"/>
</dbReference>
<dbReference type="HAMAP" id="MF_03122">
    <property type="entry name" value="Ribosomal_eS1_euk"/>
    <property type="match status" value="1"/>
</dbReference>
<dbReference type="InterPro" id="IPR001593">
    <property type="entry name" value="Ribosomal_eS1"/>
</dbReference>
<dbReference type="InterPro" id="IPR018281">
    <property type="entry name" value="Ribosomal_eS1_CS"/>
</dbReference>
<dbReference type="InterPro" id="IPR027500">
    <property type="entry name" value="Ribosomal_eS1_euk"/>
</dbReference>
<dbReference type="PANTHER" id="PTHR11830">
    <property type="entry name" value="40S RIBOSOMAL PROTEIN S3A"/>
    <property type="match status" value="1"/>
</dbReference>
<dbReference type="Pfam" id="PF01015">
    <property type="entry name" value="Ribosomal_S3Ae"/>
    <property type="match status" value="1"/>
</dbReference>
<dbReference type="SMART" id="SM01397">
    <property type="entry name" value="Ribosomal_S3Ae"/>
    <property type="match status" value="1"/>
</dbReference>
<dbReference type="PROSITE" id="PS01191">
    <property type="entry name" value="RIBOSOMAL_S3AE"/>
    <property type="match status" value="1"/>
</dbReference>
<accession>A5JSW9</accession>
<reference key="1">
    <citation type="submission" date="2007-04" db="EMBL/GenBank/DDBJ databases">
        <authorList>
            <person name="Shen H.X."/>
            <person name="Chen K.P."/>
            <person name="Yao Q."/>
        </authorList>
    </citation>
    <scope>NUCLEOTIDE SEQUENCE [MRNA]</scope>
</reference>
<protein>
    <recommendedName>
        <fullName evidence="1">Small ribosomal subunit protein eS1</fullName>
    </recommendedName>
    <alternativeName>
        <fullName evidence="3">40S ribosomal protein S3a</fullName>
    </alternativeName>
</protein>
<name>RS3A_BOMMA</name>
<keyword id="KW-0963">Cytoplasm</keyword>
<keyword id="KW-0687">Ribonucleoprotein</keyword>
<keyword id="KW-0689">Ribosomal protein</keyword>
<feature type="initiator methionine" description="Removed" evidence="1">
    <location>
        <position position="1"/>
    </location>
</feature>
<feature type="chain" id="PRO_0000389303" description="Small ribosomal subunit protein eS1">
    <location>
        <begin position="2"/>
        <end position="263"/>
    </location>
</feature>
<feature type="region of interest" description="Disordered" evidence="2">
    <location>
        <begin position="235"/>
        <end position="263"/>
    </location>
</feature>
<feature type="compositionally biased region" description="Basic and acidic residues" evidence="2">
    <location>
        <begin position="235"/>
        <end position="254"/>
    </location>
</feature>